<evidence type="ECO:0000250" key="1"/>
<evidence type="ECO:0000250" key="2">
    <source>
        <dbReference type="UniProtKB" id="P53667"/>
    </source>
</evidence>
<evidence type="ECO:0000250" key="3">
    <source>
        <dbReference type="UniProtKB" id="P53668"/>
    </source>
</evidence>
<evidence type="ECO:0000255" key="4">
    <source>
        <dbReference type="PROSITE-ProRule" id="PRU00125"/>
    </source>
</evidence>
<evidence type="ECO:0000255" key="5">
    <source>
        <dbReference type="PROSITE-ProRule" id="PRU00143"/>
    </source>
</evidence>
<evidence type="ECO:0000255" key="6">
    <source>
        <dbReference type="PROSITE-ProRule" id="PRU00159"/>
    </source>
</evidence>
<evidence type="ECO:0000256" key="7">
    <source>
        <dbReference type="SAM" id="MobiDB-lite"/>
    </source>
</evidence>
<evidence type="ECO:0000269" key="8">
    <source>
    </source>
</evidence>
<evidence type="ECO:0000269" key="9">
    <source>
    </source>
</evidence>
<evidence type="ECO:0000305" key="10"/>
<gene>
    <name type="primary">Limk1</name>
    <name type="synonym">Limk</name>
</gene>
<reference key="1">
    <citation type="journal article" date="1995" name="Oncogene">
        <title>LIMK-1 and LIMK-2, two members of a LIM motif-containing protein kinase family.</title>
        <authorList>
            <person name="Nunoue K."/>
            <person name="Ohashi K."/>
            <person name="Okano I."/>
            <person name="Mizuno K."/>
        </authorList>
    </citation>
    <scope>NUCLEOTIDE SEQUENCE [MRNA]</scope>
    <source>
        <strain>Wistar</strain>
        <tissue>Brain</tissue>
    </source>
</reference>
<reference key="2">
    <citation type="journal article" date="1998" name="J. Biol. Chem.">
        <title>Transmembrane neuregulins interact with LIM kinase 1, a cytoplasmic protein kinase implicated in development of visuospatial cognition.</title>
        <authorList>
            <person name="Wang J.Y."/>
            <person name="Frenzel K.E."/>
            <person name="Wen D."/>
            <person name="Falls D.L."/>
        </authorList>
    </citation>
    <scope>INTERACTION WITH NRG1</scope>
</reference>
<reference key="3">
    <citation type="journal article" date="2005" name="EMBO J.">
        <title>Interplay between components of a novel LIM kinase-slingshot phosphatase complex regulates cofilin.</title>
        <authorList>
            <person name="Soosairajah J."/>
            <person name="Maiti S."/>
            <person name="Wiggan O."/>
            <person name="Sarmiere P."/>
            <person name="Moussi N."/>
            <person name="Sarcevic B."/>
            <person name="Sampath R."/>
            <person name="Bamburg J.R."/>
            <person name="Bernard O."/>
        </authorList>
    </citation>
    <scope>SUBCELLULAR LOCATION</scope>
</reference>
<reference key="4">
    <citation type="journal article" date="2005" name="Genes Dev.">
        <title>The ubiquitin ligase Rnf6 regulates local LIM kinase 1 levels in axonal growth cones.</title>
        <authorList>
            <person name="Tursun B."/>
            <person name="Schlueter A."/>
            <person name="Peters M.A."/>
            <person name="Viehweger B."/>
            <person name="Ostendorff H.P."/>
            <person name="Soosairajah J."/>
            <person name="Drung A."/>
            <person name="Bossenz M."/>
            <person name="Johnsen S.A."/>
            <person name="Schweizer M."/>
            <person name="Bernard O."/>
            <person name="Bach I."/>
        </authorList>
    </citation>
    <scope>INTERACTION WITH RLIM AND RNF6</scope>
</reference>
<sequence length="647" mass="72594">MRLTLLCCTWREERMGEEGSELPVCASCSQSIYDGQYLQALNADWHADCFRCCECSTSLSHQYYEKDGQLFCKKDYWARYGESCHGCSEHITKGLVMVGGELKYHPECFICLACGNFIGDGDTYTLVEHSKLYCGQCYYQTVVTPVIEQILPDSPGSHLPHTVTLVSIPASAHGKRGLSVSIDPPHGPPGCGTEHSHTVRVQGVDPGCMSPDVKNSIHIGDRILEINGTPIRNVPLDEIDLLIQETSRLLQLTLEHDPHDSLGHGPVSDPSPLASPVHTPSGQAGSSARQKPVLRSCSIDTSPGAGSLVSPASQRKDLGRSESLRVVCRPHRIFRPSDLIHGEVLGKGCFGQAIKVTHRETGEVMVMKELIRFDEETQRTFLKEVKVMRCLEHPNVLKFIGVLYKDKRLNFITEYIKGGTLRGIIKSMDSQYPWSQRVSFAKDIASGMAYLHSMNIIHRDLNSHNCLVRENRNVVVADFGLARLMIDEKGQSEDLRSLKKPDRKKRYTVVGNPYWMAPEMINGRSYDEKVDVFSFGIVLCEIIGRVNADPDYLPRTMDFGLNVRGFLDRYCPPNCPPSFFPITVRCCDLDPEKRPSFVKLEQWLETLRMHLAGHLPLGPQLEQLERGFWETYRRGESSLPAHPEVPD</sequence>
<accession>P53669</accession>
<feature type="chain" id="PRO_0000075805" description="LIM domain kinase 1">
    <location>
        <begin position="1"/>
        <end position="647"/>
    </location>
</feature>
<feature type="domain" description="LIM zinc-binding 1" evidence="4">
    <location>
        <begin position="25"/>
        <end position="75"/>
    </location>
</feature>
<feature type="domain" description="LIM zinc-binding 2" evidence="4">
    <location>
        <begin position="84"/>
        <end position="137"/>
    </location>
</feature>
<feature type="domain" description="PDZ" evidence="5">
    <location>
        <begin position="165"/>
        <end position="258"/>
    </location>
</feature>
<feature type="domain" description="Protein kinase" evidence="6">
    <location>
        <begin position="339"/>
        <end position="604"/>
    </location>
</feature>
<feature type="region of interest" description="Disordered" evidence="7">
    <location>
        <begin position="256"/>
        <end position="316"/>
    </location>
</feature>
<feature type="compositionally biased region" description="Polar residues" evidence="7">
    <location>
        <begin position="278"/>
        <end position="289"/>
    </location>
</feature>
<feature type="active site" evidence="1">
    <location>
        <position position="460"/>
    </location>
</feature>
<feature type="binding site" evidence="6">
    <location>
        <begin position="345"/>
        <end position="353"/>
    </location>
    <ligand>
        <name>ATP</name>
        <dbReference type="ChEBI" id="CHEBI:30616"/>
    </ligand>
</feature>
<feature type="binding site" evidence="6">
    <location>
        <position position="368"/>
    </location>
    <ligand>
        <name>ATP</name>
        <dbReference type="ChEBI" id="CHEBI:30616"/>
    </ligand>
</feature>
<feature type="modified residue" description="Phosphoserine" evidence="2">
    <location>
        <position position="210"/>
    </location>
</feature>
<feature type="modified residue" description="Phosphothreonine" evidence="2">
    <location>
        <position position="229"/>
    </location>
</feature>
<feature type="modified residue" description="Phosphoserine" evidence="2">
    <location>
        <position position="298"/>
    </location>
</feature>
<feature type="modified residue" description="Phosphoserine" evidence="2">
    <location>
        <position position="302"/>
    </location>
</feature>
<feature type="modified residue" description="Phosphoserine" evidence="2">
    <location>
        <position position="307"/>
    </location>
</feature>
<feature type="modified residue" description="Phosphoserine" evidence="2">
    <location>
        <position position="310"/>
    </location>
</feature>
<feature type="modified residue" description="Phosphoserine; by MAPKAPK2" evidence="2">
    <location>
        <position position="323"/>
    </location>
</feature>
<feature type="modified residue" description="Phosphoserine" evidence="2">
    <location>
        <position position="337"/>
    </location>
</feature>
<feature type="modified residue" description="Phosphothreonine; by ROCK1 and PAK1" evidence="2">
    <location>
        <position position="508"/>
    </location>
</feature>
<protein>
    <recommendedName>
        <fullName>LIM domain kinase 1</fullName>
        <shortName>LIMK-1</shortName>
        <ecNumber evidence="2">2.7.11.1</ecNumber>
    </recommendedName>
</protein>
<organism>
    <name type="scientific">Rattus norvegicus</name>
    <name type="common">Rat</name>
    <dbReference type="NCBI Taxonomy" id="10116"/>
    <lineage>
        <taxon>Eukaryota</taxon>
        <taxon>Metazoa</taxon>
        <taxon>Chordata</taxon>
        <taxon>Craniata</taxon>
        <taxon>Vertebrata</taxon>
        <taxon>Euteleostomi</taxon>
        <taxon>Mammalia</taxon>
        <taxon>Eutheria</taxon>
        <taxon>Euarchontoglires</taxon>
        <taxon>Glires</taxon>
        <taxon>Rodentia</taxon>
        <taxon>Myomorpha</taxon>
        <taxon>Muroidea</taxon>
        <taxon>Muridae</taxon>
        <taxon>Murinae</taxon>
        <taxon>Rattus</taxon>
    </lineage>
</organism>
<name>LIMK1_RAT</name>
<comment type="function">
    <text evidence="2">Serine/threonine-protein kinase that plays an essential role in the regulation of actin filament dynamics. Acts downstream of several Rho family GTPase signal transduction pathways. Activated by upstream kinases including ROCK1, PAK1 and PAK4, which phosphorylate LIMK1 on a threonine residue located in its activation loop. LIMK1 subsequently phosphorylates and inactivates the actin binding/depolymerizing factors cofilin-1/CFL1, cofilin-2/CFL2 and destrin/DSTN, thereby preventing the cleavage of filamentous actin (F-actin), and stabilizing the actin cytoskeleton. In this way LIMK1 regulates several actin-dependent biological processes including cell motility, cell cycle progression, and differentiation. Phosphorylates TPPP on serine residues, thereby promoting microtubule disassembly. Stimulates axonal outgrowth and may be involved in brain development.</text>
</comment>
<comment type="catalytic activity">
    <reaction evidence="2">
        <text>L-seryl-[protein] + ATP = O-phospho-L-seryl-[protein] + ADP + H(+)</text>
        <dbReference type="Rhea" id="RHEA:17989"/>
        <dbReference type="Rhea" id="RHEA-COMP:9863"/>
        <dbReference type="Rhea" id="RHEA-COMP:11604"/>
        <dbReference type="ChEBI" id="CHEBI:15378"/>
        <dbReference type="ChEBI" id="CHEBI:29999"/>
        <dbReference type="ChEBI" id="CHEBI:30616"/>
        <dbReference type="ChEBI" id="CHEBI:83421"/>
        <dbReference type="ChEBI" id="CHEBI:456216"/>
        <dbReference type="EC" id="2.7.11.1"/>
    </reaction>
    <physiologicalReaction direction="left-to-right" evidence="2">
        <dbReference type="Rhea" id="RHEA:17990"/>
    </physiologicalReaction>
</comment>
<comment type="catalytic activity">
    <reaction evidence="2">
        <text>L-threonyl-[protein] + ATP = O-phospho-L-threonyl-[protein] + ADP + H(+)</text>
        <dbReference type="Rhea" id="RHEA:46608"/>
        <dbReference type="Rhea" id="RHEA-COMP:11060"/>
        <dbReference type="Rhea" id="RHEA-COMP:11605"/>
        <dbReference type="ChEBI" id="CHEBI:15378"/>
        <dbReference type="ChEBI" id="CHEBI:30013"/>
        <dbReference type="ChEBI" id="CHEBI:30616"/>
        <dbReference type="ChEBI" id="CHEBI:61977"/>
        <dbReference type="ChEBI" id="CHEBI:456216"/>
        <dbReference type="EC" id="2.7.11.1"/>
    </reaction>
    <physiologicalReaction direction="left-to-right" evidence="2">
        <dbReference type="Rhea" id="RHEA:46609"/>
    </physiologicalReaction>
</comment>
<comment type="subunit">
    <text evidence="2 3 9">Interacts (via LIM domain) with the cytoplasmic domain of NRG1 (PubMed:9685409). Interacts with NISCH. Interacts with RLIM and RNF6. Self-associates to form homodimers. Interacts with HSP90AA1; this interaction promotes LIMK1 dimerization and subsequent transphosphorylation. Interacts with CDKN1C. Interacts with SSH1. Interacts with ROCK1. Interacts (via LIM zinc-binding domains) with FAM89B/LRAP25 (via LRR repeat). Forms a tripartite complex with CDC42BPA, CDC42BPB and FAM89B/LRAP25 (By similarity).</text>
</comment>
<comment type="subcellular location">
    <subcellularLocation>
        <location evidence="8">Cytoplasm</location>
    </subcellularLocation>
    <subcellularLocation>
        <location evidence="8">Nucleus</location>
    </subcellularLocation>
    <subcellularLocation>
        <location evidence="2">Cytoplasm</location>
        <location evidence="2">Cytoskeleton</location>
    </subcellularLocation>
    <subcellularLocation>
        <location evidence="3">Cell projection</location>
        <location evidence="3">Lamellipodium</location>
    </subcellularLocation>
    <text evidence="2 3">Predominantly found in the cytoplasm. Localizes in the lamellipodium in a CDC42BPA, CDC42BPB and FAM89B/LRAP25-dependent manner.</text>
</comment>
<comment type="PTM">
    <text evidence="2">Autophosphorylated (By similarity). Phosphorylated on Thr-508 by ROCK1 and PAK1, resulting in activation. Phosphorylated by PAK4 which increases the ability of LIMK1 to phosphorylate cofilin. Phosphorylated at Ser-323 by MAPKAPK2 during activation of VEGFA-induced signaling, which results in activation of LIMK1 and promotion of actin reorganization, cell migration, and tubule formation of endothelial cells. Dephosphorylated and inactivated by SSH1. Phosphorylated by CDC42BP (By similarity).</text>
</comment>
<comment type="PTM">
    <text evidence="3">Ubiquitinated. 'Lys-48'-linked polyubiquitination by RNF6 leads to proteasomal degradation through the 26S proteasome, modulating LIMK1 levels in the growth cone and its effect on axonal outgrowth. Also polyubiquitinated by RLIM (By similarity).</text>
</comment>
<comment type="similarity">
    <text evidence="10">Belongs to the protein kinase superfamily. TKL Ser/Thr protein kinase family.</text>
</comment>
<dbReference type="EC" id="2.7.11.1" evidence="2"/>
<dbReference type="EMBL" id="D31873">
    <property type="protein sequence ID" value="BAA06672.1"/>
    <property type="molecule type" value="mRNA"/>
</dbReference>
<dbReference type="PIR" id="I58353">
    <property type="entry name" value="I58353"/>
</dbReference>
<dbReference type="SMR" id="P53669"/>
<dbReference type="FunCoup" id="P53669">
    <property type="interactions" value="1532"/>
</dbReference>
<dbReference type="IntAct" id="P53669">
    <property type="interactions" value="1"/>
</dbReference>
<dbReference type="STRING" id="10116.ENSRNOP00000073078"/>
<dbReference type="BindingDB" id="P53669"/>
<dbReference type="ChEMBL" id="CHEMBL3407314"/>
<dbReference type="iPTMnet" id="P53669"/>
<dbReference type="PhosphoSitePlus" id="P53669"/>
<dbReference type="PaxDb" id="10116-ENSRNOP00000001996"/>
<dbReference type="UCSC" id="RGD:62055">
    <property type="organism name" value="rat"/>
</dbReference>
<dbReference type="AGR" id="RGD:62055"/>
<dbReference type="RGD" id="62055">
    <property type="gene designation" value="Limk1"/>
</dbReference>
<dbReference type="eggNOG" id="KOG1187">
    <property type="taxonomic scope" value="Eukaryota"/>
</dbReference>
<dbReference type="InParanoid" id="P53669"/>
<dbReference type="PhylomeDB" id="P53669"/>
<dbReference type="BRENDA" id="2.7.11.1">
    <property type="organism ID" value="5301"/>
</dbReference>
<dbReference type="Reactome" id="R-RNO-2029482">
    <property type="pathway name" value="Regulation of actin dynamics for phagocytic cup formation"/>
</dbReference>
<dbReference type="Reactome" id="R-RNO-399954">
    <property type="pathway name" value="Sema3A PAK dependent Axon repulsion"/>
</dbReference>
<dbReference type="Reactome" id="R-RNO-5627123">
    <property type="pathway name" value="RHO GTPases activate PAKs"/>
</dbReference>
<dbReference type="PRO" id="PR:P53669"/>
<dbReference type="Proteomes" id="UP000002494">
    <property type="component" value="Unplaced"/>
</dbReference>
<dbReference type="GO" id="GO:0044295">
    <property type="term" value="C:axonal growth cone"/>
    <property type="evidence" value="ECO:0000314"/>
    <property type="project" value="RGD"/>
</dbReference>
<dbReference type="GO" id="GO:0005737">
    <property type="term" value="C:cytoplasm"/>
    <property type="evidence" value="ECO:0000250"/>
    <property type="project" value="UniProtKB"/>
</dbReference>
<dbReference type="GO" id="GO:0005856">
    <property type="term" value="C:cytoskeleton"/>
    <property type="evidence" value="ECO:0007669"/>
    <property type="project" value="UniProtKB-SubCell"/>
</dbReference>
<dbReference type="GO" id="GO:0005925">
    <property type="term" value="C:focal adhesion"/>
    <property type="evidence" value="ECO:0000266"/>
    <property type="project" value="RGD"/>
</dbReference>
<dbReference type="GO" id="GO:0098978">
    <property type="term" value="C:glutamatergic synapse"/>
    <property type="evidence" value="ECO:0000314"/>
    <property type="project" value="SynGO"/>
</dbReference>
<dbReference type="GO" id="GO:0030027">
    <property type="term" value="C:lamellipodium"/>
    <property type="evidence" value="ECO:0000250"/>
    <property type="project" value="UniProtKB"/>
</dbReference>
<dbReference type="GO" id="GO:0001673">
    <property type="term" value="C:male germ cell nucleus"/>
    <property type="evidence" value="ECO:0000266"/>
    <property type="project" value="RGD"/>
</dbReference>
<dbReference type="GO" id="GO:0016020">
    <property type="term" value="C:membrane"/>
    <property type="evidence" value="ECO:0000266"/>
    <property type="project" value="RGD"/>
</dbReference>
<dbReference type="GO" id="GO:0043005">
    <property type="term" value="C:neuron projection"/>
    <property type="evidence" value="ECO:0000250"/>
    <property type="project" value="UniProtKB"/>
</dbReference>
<dbReference type="GO" id="GO:0005634">
    <property type="term" value="C:nucleus"/>
    <property type="evidence" value="ECO:0000266"/>
    <property type="project" value="RGD"/>
</dbReference>
<dbReference type="GO" id="GO:0048471">
    <property type="term" value="C:perinuclear region of cytoplasm"/>
    <property type="evidence" value="ECO:0000314"/>
    <property type="project" value="RGD"/>
</dbReference>
<dbReference type="GO" id="GO:0098794">
    <property type="term" value="C:postsynapse"/>
    <property type="evidence" value="ECO:0000266"/>
    <property type="project" value="RGD"/>
</dbReference>
<dbReference type="GO" id="GO:0005524">
    <property type="term" value="F:ATP binding"/>
    <property type="evidence" value="ECO:0007669"/>
    <property type="project" value="UniProtKB-KW"/>
</dbReference>
<dbReference type="GO" id="GO:0031072">
    <property type="term" value="F:heat shock protein binding"/>
    <property type="evidence" value="ECO:0000266"/>
    <property type="project" value="RGD"/>
</dbReference>
<dbReference type="GO" id="GO:0046872">
    <property type="term" value="F:metal ion binding"/>
    <property type="evidence" value="ECO:0007669"/>
    <property type="project" value="UniProtKB-KW"/>
</dbReference>
<dbReference type="GO" id="GO:0106310">
    <property type="term" value="F:protein serine kinase activity"/>
    <property type="evidence" value="ECO:0007669"/>
    <property type="project" value="RHEA"/>
</dbReference>
<dbReference type="GO" id="GO:0004674">
    <property type="term" value="F:protein serine/threonine kinase activity"/>
    <property type="evidence" value="ECO:0000250"/>
    <property type="project" value="UniProtKB"/>
</dbReference>
<dbReference type="GO" id="GO:1990948">
    <property type="term" value="F:ubiquitin ligase inhibitor activity"/>
    <property type="evidence" value="ECO:0000266"/>
    <property type="project" value="RGD"/>
</dbReference>
<dbReference type="GO" id="GO:0031625">
    <property type="term" value="F:ubiquitin protein ligase binding"/>
    <property type="evidence" value="ECO:0000266"/>
    <property type="project" value="RGD"/>
</dbReference>
<dbReference type="GO" id="GO:0030036">
    <property type="term" value="P:actin cytoskeleton organization"/>
    <property type="evidence" value="ECO:0000318"/>
    <property type="project" value="GO_Central"/>
</dbReference>
<dbReference type="GO" id="GO:0048675">
    <property type="term" value="P:axon extension"/>
    <property type="evidence" value="ECO:0000266"/>
    <property type="project" value="RGD"/>
</dbReference>
<dbReference type="GO" id="GO:0032233">
    <property type="term" value="P:positive regulation of actin filament bundle assembly"/>
    <property type="evidence" value="ECO:0000266"/>
    <property type="project" value="RGD"/>
</dbReference>
<dbReference type="GO" id="GO:0045773">
    <property type="term" value="P:positive regulation of axon extension"/>
    <property type="evidence" value="ECO:0000250"/>
    <property type="project" value="UniProtKB"/>
</dbReference>
<dbReference type="GO" id="GO:0051496">
    <property type="term" value="P:positive regulation of stress fiber assembly"/>
    <property type="evidence" value="ECO:0000266"/>
    <property type="project" value="RGD"/>
</dbReference>
<dbReference type="GO" id="GO:0006468">
    <property type="term" value="P:protein phosphorylation"/>
    <property type="evidence" value="ECO:0000250"/>
    <property type="project" value="UniProtKB"/>
</dbReference>
<dbReference type="GO" id="GO:1905274">
    <property type="term" value="P:regulation of modification of postsynaptic actin cytoskeleton"/>
    <property type="evidence" value="ECO:0000314"/>
    <property type="project" value="SynGO"/>
</dbReference>
<dbReference type="GO" id="GO:0043149">
    <property type="term" value="P:stress fiber assembly"/>
    <property type="evidence" value="ECO:0000266"/>
    <property type="project" value="RGD"/>
</dbReference>
<dbReference type="CDD" id="cd09462">
    <property type="entry name" value="LIM1_LIMK1"/>
    <property type="match status" value="1"/>
</dbReference>
<dbReference type="CDD" id="cd09464">
    <property type="entry name" value="LIM2_LIMK1"/>
    <property type="match status" value="1"/>
</dbReference>
<dbReference type="CDD" id="cd06754">
    <property type="entry name" value="PDZ_LIMK-like"/>
    <property type="match status" value="1"/>
</dbReference>
<dbReference type="CDD" id="cd14221">
    <property type="entry name" value="STKc_LIMK1"/>
    <property type="match status" value="1"/>
</dbReference>
<dbReference type="FunFam" id="1.10.510.10:FF:000282">
    <property type="entry name" value="LIM domain kinase 1"/>
    <property type="match status" value="1"/>
</dbReference>
<dbReference type="FunFam" id="2.10.110.10:FF:000082">
    <property type="entry name" value="LIM domain kinase 1"/>
    <property type="match status" value="1"/>
</dbReference>
<dbReference type="FunFam" id="2.10.110.10:FF:000083">
    <property type="entry name" value="LIM domain kinase 1"/>
    <property type="match status" value="1"/>
</dbReference>
<dbReference type="FunFam" id="2.30.42.10:FF:000101">
    <property type="entry name" value="LIM domain kinase 1"/>
    <property type="match status" value="1"/>
</dbReference>
<dbReference type="FunFam" id="3.30.200.20:FF:000038">
    <property type="entry name" value="LIM domain kinase 2"/>
    <property type="match status" value="1"/>
</dbReference>
<dbReference type="Gene3D" id="2.30.42.10">
    <property type="match status" value="1"/>
</dbReference>
<dbReference type="Gene3D" id="2.10.110.10">
    <property type="entry name" value="Cysteine Rich Protein"/>
    <property type="match status" value="2"/>
</dbReference>
<dbReference type="Gene3D" id="3.30.200.20">
    <property type="entry name" value="Phosphorylase Kinase, domain 1"/>
    <property type="match status" value="1"/>
</dbReference>
<dbReference type="Gene3D" id="1.10.510.10">
    <property type="entry name" value="Transferase(Phosphotransferase) domain 1"/>
    <property type="match status" value="1"/>
</dbReference>
<dbReference type="InterPro" id="IPR050940">
    <property type="entry name" value="Actin_reg-Ser/Thr_kinase"/>
</dbReference>
<dbReference type="InterPro" id="IPR011009">
    <property type="entry name" value="Kinase-like_dom_sf"/>
</dbReference>
<dbReference type="InterPro" id="IPR001478">
    <property type="entry name" value="PDZ"/>
</dbReference>
<dbReference type="InterPro" id="IPR036034">
    <property type="entry name" value="PDZ_sf"/>
</dbReference>
<dbReference type="InterPro" id="IPR000719">
    <property type="entry name" value="Prot_kinase_dom"/>
</dbReference>
<dbReference type="InterPro" id="IPR017441">
    <property type="entry name" value="Protein_kinase_ATP_BS"/>
</dbReference>
<dbReference type="InterPro" id="IPR001245">
    <property type="entry name" value="Ser-Thr/Tyr_kinase_cat_dom"/>
</dbReference>
<dbReference type="InterPro" id="IPR001781">
    <property type="entry name" value="Znf_LIM"/>
</dbReference>
<dbReference type="PANTHER" id="PTHR46485">
    <property type="entry name" value="LIM DOMAIN KINASE 1"/>
    <property type="match status" value="1"/>
</dbReference>
<dbReference type="PANTHER" id="PTHR46485:SF7">
    <property type="entry name" value="LIM DOMAIN KINASE 1"/>
    <property type="match status" value="1"/>
</dbReference>
<dbReference type="Pfam" id="PF00412">
    <property type="entry name" value="LIM"/>
    <property type="match status" value="2"/>
</dbReference>
<dbReference type="Pfam" id="PF00595">
    <property type="entry name" value="PDZ"/>
    <property type="match status" value="1"/>
</dbReference>
<dbReference type="Pfam" id="PF07714">
    <property type="entry name" value="PK_Tyr_Ser-Thr"/>
    <property type="match status" value="1"/>
</dbReference>
<dbReference type="PRINTS" id="PR00109">
    <property type="entry name" value="TYRKINASE"/>
</dbReference>
<dbReference type="SMART" id="SM00132">
    <property type="entry name" value="LIM"/>
    <property type="match status" value="2"/>
</dbReference>
<dbReference type="SMART" id="SM00228">
    <property type="entry name" value="PDZ"/>
    <property type="match status" value="1"/>
</dbReference>
<dbReference type="SUPFAM" id="SSF57716">
    <property type="entry name" value="Glucocorticoid receptor-like (DNA-binding domain)"/>
    <property type="match status" value="3"/>
</dbReference>
<dbReference type="SUPFAM" id="SSF50156">
    <property type="entry name" value="PDZ domain-like"/>
    <property type="match status" value="1"/>
</dbReference>
<dbReference type="SUPFAM" id="SSF56112">
    <property type="entry name" value="Protein kinase-like (PK-like)"/>
    <property type="match status" value="1"/>
</dbReference>
<dbReference type="PROSITE" id="PS00478">
    <property type="entry name" value="LIM_DOMAIN_1"/>
    <property type="match status" value="2"/>
</dbReference>
<dbReference type="PROSITE" id="PS50023">
    <property type="entry name" value="LIM_DOMAIN_2"/>
    <property type="match status" value="2"/>
</dbReference>
<dbReference type="PROSITE" id="PS50106">
    <property type="entry name" value="PDZ"/>
    <property type="match status" value="1"/>
</dbReference>
<dbReference type="PROSITE" id="PS00107">
    <property type="entry name" value="PROTEIN_KINASE_ATP"/>
    <property type="match status" value="1"/>
</dbReference>
<dbReference type="PROSITE" id="PS50011">
    <property type="entry name" value="PROTEIN_KINASE_DOM"/>
    <property type="match status" value="1"/>
</dbReference>
<keyword id="KW-0067">ATP-binding</keyword>
<keyword id="KW-0966">Cell projection</keyword>
<keyword id="KW-0963">Cytoplasm</keyword>
<keyword id="KW-0206">Cytoskeleton</keyword>
<keyword id="KW-0418">Kinase</keyword>
<keyword id="KW-0440">LIM domain</keyword>
<keyword id="KW-0479">Metal-binding</keyword>
<keyword id="KW-0547">Nucleotide-binding</keyword>
<keyword id="KW-0539">Nucleus</keyword>
<keyword id="KW-0597">Phosphoprotein</keyword>
<keyword id="KW-1185">Reference proteome</keyword>
<keyword id="KW-0677">Repeat</keyword>
<keyword id="KW-0723">Serine/threonine-protein kinase</keyword>
<keyword id="KW-0808">Transferase</keyword>
<keyword id="KW-0832">Ubl conjugation</keyword>
<keyword id="KW-0862">Zinc</keyword>
<proteinExistence type="evidence at protein level"/>